<protein>
    <recommendedName>
        <fullName evidence="1">tRNA modification GTPase MnmE</fullName>
        <ecNumber evidence="1">3.6.-.-</ecNumber>
    </recommendedName>
</protein>
<accession>Q4ZL12</accession>
<evidence type="ECO:0000255" key="1">
    <source>
        <dbReference type="HAMAP-Rule" id="MF_00379"/>
    </source>
</evidence>
<gene>
    <name evidence="1" type="primary">mnmE</name>
    <name evidence="1" type="synonym">trmE</name>
    <name type="ordered locus">Psyr_5133</name>
</gene>
<proteinExistence type="inferred from homology"/>
<organism>
    <name type="scientific">Pseudomonas syringae pv. syringae (strain B728a)</name>
    <dbReference type="NCBI Taxonomy" id="205918"/>
    <lineage>
        <taxon>Bacteria</taxon>
        <taxon>Pseudomonadati</taxon>
        <taxon>Pseudomonadota</taxon>
        <taxon>Gammaproteobacteria</taxon>
        <taxon>Pseudomonadales</taxon>
        <taxon>Pseudomonadaceae</taxon>
        <taxon>Pseudomonas</taxon>
        <taxon>Pseudomonas syringae</taxon>
    </lineage>
</organism>
<dbReference type="EC" id="3.6.-.-" evidence="1"/>
<dbReference type="EMBL" id="CP000075">
    <property type="protein sequence ID" value="AAY40160.1"/>
    <property type="molecule type" value="Genomic_DNA"/>
</dbReference>
<dbReference type="RefSeq" id="WP_011269445.1">
    <property type="nucleotide sequence ID" value="NC_007005.1"/>
</dbReference>
<dbReference type="RefSeq" id="YP_238198.1">
    <property type="nucleotide sequence ID" value="NC_007005.1"/>
</dbReference>
<dbReference type="SMR" id="Q4ZL12"/>
<dbReference type="STRING" id="205918.Psyr_5133"/>
<dbReference type="KEGG" id="psb:Psyr_5133"/>
<dbReference type="PATRIC" id="fig|205918.7.peg.5294"/>
<dbReference type="eggNOG" id="COG0486">
    <property type="taxonomic scope" value="Bacteria"/>
</dbReference>
<dbReference type="HOGENOM" id="CLU_019624_4_1_6"/>
<dbReference type="OrthoDB" id="9805918at2"/>
<dbReference type="Proteomes" id="UP000000426">
    <property type="component" value="Chromosome"/>
</dbReference>
<dbReference type="GO" id="GO:0005829">
    <property type="term" value="C:cytosol"/>
    <property type="evidence" value="ECO:0007669"/>
    <property type="project" value="TreeGrafter"/>
</dbReference>
<dbReference type="GO" id="GO:0005525">
    <property type="term" value="F:GTP binding"/>
    <property type="evidence" value="ECO:0007669"/>
    <property type="project" value="UniProtKB-UniRule"/>
</dbReference>
<dbReference type="GO" id="GO:0003924">
    <property type="term" value="F:GTPase activity"/>
    <property type="evidence" value="ECO:0007669"/>
    <property type="project" value="UniProtKB-UniRule"/>
</dbReference>
<dbReference type="GO" id="GO:0046872">
    <property type="term" value="F:metal ion binding"/>
    <property type="evidence" value="ECO:0007669"/>
    <property type="project" value="UniProtKB-KW"/>
</dbReference>
<dbReference type="GO" id="GO:0030488">
    <property type="term" value="P:tRNA methylation"/>
    <property type="evidence" value="ECO:0007669"/>
    <property type="project" value="TreeGrafter"/>
</dbReference>
<dbReference type="GO" id="GO:0002098">
    <property type="term" value="P:tRNA wobble uridine modification"/>
    <property type="evidence" value="ECO:0007669"/>
    <property type="project" value="TreeGrafter"/>
</dbReference>
<dbReference type="CDD" id="cd04164">
    <property type="entry name" value="trmE"/>
    <property type="match status" value="1"/>
</dbReference>
<dbReference type="CDD" id="cd14858">
    <property type="entry name" value="TrmE_N"/>
    <property type="match status" value="1"/>
</dbReference>
<dbReference type="FunFam" id="3.30.1360.120:FF:000001">
    <property type="entry name" value="tRNA modification GTPase MnmE"/>
    <property type="match status" value="1"/>
</dbReference>
<dbReference type="FunFam" id="3.40.50.300:FF:000249">
    <property type="entry name" value="tRNA modification GTPase MnmE"/>
    <property type="match status" value="1"/>
</dbReference>
<dbReference type="Gene3D" id="3.40.50.300">
    <property type="entry name" value="P-loop containing nucleotide triphosphate hydrolases"/>
    <property type="match status" value="1"/>
</dbReference>
<dbReference type="Gene3D" id="3.30.1360.120">
    <property type="entry name" value="Probable tRNA modification gtpase trme, domain 1"/>
    <property type="match status" value="1"/>
</dbReference>
<dbReference type="Gene3D" id="1.20.120.430">
    <property type="entry name" value="tRNA modification GTPase MnmE domain 2"/>
    <property type="match status" value="1"/>
</dbReference>
<dbReference type="HAMAP" id="MF_00379">
    <property type="entry name" value="GTPase_MnmE"/>
    <property type="match status" value="1"/>
</dbReference>
<dbReference type="InterPro" id="IPR031168">
    <property type="entry name" value="G_TrmE"/>
</dbReference>
<dbReference type="InterPro" id="IPR006073">
    <property type="entry name" value="GTP-bd"/>
</dbReference>
<dbReference type="InterPro" id="IPR018948">
    <property type="entry name" value="GTP-bd_TrmE_N"/>
</dbReference>
<dbReference type="InterPro" id="IPR004520">
    <property type="entry name" value="GTPase_MnmE"/>
</dbReference>
<dbReference type="InterPro" id="IPR027368">
    <property type="entry name" value="MnmE_dom2"/>
</dbReference>
<dbReference type="InterPro" id="IPR025867">
    <property type="entry name" value="MnmE_helical"/>
</dbReference>
<dbReference type="InterPro" id="IPR027417">
    <property type="entry name" value="P-loop_NTPase"/>
</dbReference>
<dbReference type="InterPro" id="IPR005225">
    <property type="entry name" value="Small_GTP-bd"/>
</dbReference>
<dbReference type="InterPro" id="IPR027266">
    <property type="entry name" value="TrmE/GcvT_dom1"/>
</dbReference>
<dbReference type="NCBIfam" id="TIGR00450">
    <property type="entry name" value="mnmE_trmE_thdF"/>
    <property type="match status" value="1"/>
</dbReference>
<dbReference type="NCBIfam" id="NF003661">
    <property type="entry name" value="PRK05291.1-3"/>
    <property type="match status" value="1"/>
</dbReference>
<dbReference type="NCBIfam" id="TIGR00231">
    <property type="entry name" value="small_GTP"/>
    <property type="match status" value="1"/>
</dbReference>
<dbReference type="PANTHER" id="PTHR42714">
    <property type="entry name" value="TRNA MODIFICATION GTPASE GTPBP3"/>
    <property type="match status" value="1"/>
</dbReference>
<dbReference type="PANTHER" id="PTHR42714:SF2">
    <property type="entry name" value="TRNA MODIFICATION GTPASE GTPBP3, MITOCHONDRIAL"/>
    <property type="match status" value="1"/>
</dbReference>
<dbReference type="Pfam" id="PF01926">
    <property type="entry name" value="MMR_HSR1"/>
    <property type="match status" value="1"/>
</dbReference>
<dbReference type="Pfam" id="PF12631">
    <property type="entry name" value="MnmE_helical"/>
    <property type="match status" value="1"/>
</dbReference>
<dbReference type="Pfam" id="PF10396">
    <property type="entry name" value="TrmE_N"/>
    <property type="match status" value="1"/>
</dbReference>
<dbReference type="PRINTS" id="PR00326">
    <property type="entry name" value="GTP1OBG"/>
</dbReference>
<dbReference type="SUPFAM" id="SSF52540">
    <property type="entry name" value="P-loop containing nucleoside triphosphate hydrolases"/>
    <property type="match status" value="1"/>
</dbReference>
<dbReference type="SUPFAM" id="SSF116878">
    <property type="entry name" value="TrmE connector domain"/>
    <property type="match status" value="1"/>
</dbReference>
<dbReference type="PROSITE" id="PS51709">
    <property type="entry name" value="G_TRME"/>
    <property type="match status" value="1"/>
</dbReference>
<reference key="1">
    <citation type="journal article" date="2005" name="Proc. Natl. Acad. Sci. U.S.A.">
        <title>Comparison of the complete genome sequences of Pseudomonas syringae pv. syringae B728a and pv. tomato DC3000.</title>
        <authorList>
            <person name="Feil H."/>
            <person name="Feil W.S."/>
            <person name="Chain P."/>
            <person name="Larimer F."/>
            <person name="Dibartolo G."/>
            <person name="Copeland A."/>
            <person name="Lykidis A."/>
            <person name="Trong S."/>
            <person name="Nolan M."/>
            <person name="Goltsman E."/>
            <person name="Thiel J."/>
            <person name="Malfatti S."/>
            <person name="Loper J.E."/>
            <person name="Lapidus A."/>
            <person name="Detter J.C."/>
            <person name="Land M."/>
            <person name="Richardson P.M."/>
            <person name="Kyrpides N.C."/>
            <person name="Ivanova N."/>
            <person name="Lindow S.E."/>
        </authorList>
    </citation>
    <scope>NUCLEOTIDE SEQUENCE [LARGE SCALE GENOMIC DNA]</scope>
    <source>
        <strain>B728a</strain>
    </source>
</reference>
<keyword id="KW-0963">Cytoplasm</keyword>
<keyword id="KW-0342">GTP-binding</keyword>
<keyword id="KW-0378">Hydrolase</keyword>
<keyword id="KW-0460">Magnesium</keyword>
<keyword id="KW-0479">Metal-binding</keyword>
<keyword id="KW-0547">Nucleotide-binding</keyword>
<keyword id="KW-0630">Potassium</keyword>
<keyword id="KW-0819">tRNA processing</keyword>
<comment type="function">
    <text evidence="1">Exhibits a very high intrinsic GTPase hydrolysis rate. Involved in the addition of a carboxymethylaminomethyl (cmnm) group at the wobble position (U34) of certain tRNAs, forming tRNA-cmnm(5)s(2)U34.</text>
</comment>
<comment type="cofactor">
    <cofactor evidence="1">
        <name>K(+)</name>
        <dbReference type="ChEBI" id="CHEBI:29103"/>
    </cofactor>
    <text evidence="1">Binds 1 potassium ion per subunit.</text>
</comment>
<comment type="subunit">
    <text evidence="1">Homodimer. Heterotetramer of two MnmE and two MnmG subunits.</text>
</comment>
<comment type="subcellular location">
    <subcellularLocation>
        <location evidence="1">Cytoplasm</location>
    </subcellularLocation>
</comment>
<comment type="similarity">
    <text evidence="1">Belongs to the TRAFAC class TrmE-Era-EngA-EngB-Septin-like GTPase superfamily. TrmE GTPase family.</text>
</comment>
<feature type="chain" id="PRO_1000048860" description="tRNA modification GTPase MnmE">
    <location>
        <begin position="1"/>
        <end position="456"/>
    </location>
</feature>
<feature type="domain" description="TrmE-type G">
    <location>
        <begin position="216"/>
        <end position="379"/>
    </location>
</feature>
<feature type="binding site" evidence="1">
    <location>
        <position position="24"/>
    </location>
    <ligand>
        <name>(6S)-5-formyl-5,6,7,8-tetrahydrofolate</name>
        <dbReference type="ChEBI" id="CHEBI:57457"/>
    </ligand>
</feature>
<feature type="binding site" evidence="1">
    <location>
        <position position="81"/>
    </location>
    <ligand>
        <name>(6S)-5-formyl-5,6,7,8-tetrahydrofolate</name>
        <dbReference type="ChEBI" id="CHEBI:57457"/>
    </ligand>
</feature>
<feature type="binding site" evidence="1">
    <location>
        <position position="120"/>
    </location>
    <ligand>
        <name>(6S)-5-formyl-5,6,7,8-tetrahydrofolate</name>
        <dbReference type="ChEBI" id="CHEBI:57457"/>
    </ligand>
</feature>
<feature type="binding site" evidence="1">
    <location>
        <begin position="226"/>
        <end position="231"/>
    </location>
    <ligand>
        <name>GTP</name>
        <dbReference type="ChEBI" id="CHEBI:37565"/>
    </ligand>
</feature>
<feature type="binding site" evidence="1">
    <location>
        <position position="226"/>
    </location>
    <ligand>
        <name>K(+)</name>
        <dbReference type="ChEBI" id="CHEBI:29103"/>
    </ligand>
</feature>
<feature type="binding site" evidence="1">
    <location>
        <position position="230"/>
    </location>
    <ligand>
        <name>Mg(2+)</name>
        <dbReference type="ChEBI" id="CHEBI:18420"/>
    </ligand>
</feature>
<feature type="binding site" evidence="1">
    <location>
        <begin position="245"/>
        <end position="251"/>
    </location>
    <ligand>
        <name>GTP</name>
        <dbReference type="ChEBI" id="CHEBI:37565"/>
    </ligand>
</feature>
<feature type="binding site" evidence="1">
    <location>
        <position position="245"/>
    </location>
    <ligand>
        <name>K(+)</name>
        <dbReference type="ChEBI" id="CHEBI:29103"/>
    </ligand>
</feature>
<feature type="binding site" evidence="1">
    <location>
        <position position="247"/>
    </location>
    <ligand>
        <name>K(+)</name>
        <dbReference type="ChEBI" id="CHEBI:29103"/>
    </ligand>
</feature>
<feature type="binding site" evidence="1">
    <location>
        <position position="250"/>
    </location>
    <ligand>
        <name>K(+)</name>
        <dbReference type="ChEBI" id="CHEBI:29103"/>
    </ligand>
</feature>
<feature type="binding site" evidence="1">
    <location>
        <position position="251"/>
    </location>
    <ligand>
        <name>Mg(2+)</name>
        <dbReference type="ChEBI" id="CHEBI:18420"/>
    </ligand>
</feature>
<feature type="binding site" evidence="1">
    <location>
        <begin position="270"/>
        <end position="273"/>
    </location>
    <ligand>
        <name>GTP</name>
        <dbReference type="ChEBI" id="CHEBI:37565"/>
    </ligand>
</feature>
<feature type="binding site" evidence="1">
    <location>
        <begin position="335"/>
        <end position="338"/>
    </location>
    <ligand>
        <name>GTP</name>
        <dbReference type="ChEBI" id="CHEBI:37565"/>
    </ligand>
</feature>
<feature type="binding site" evidence="1">
    <location>
        <begin position="359"/>
        <end position="361"/>
    </location>
    <ligand>
        <name>GTP</name>
        <dbReference type="ChEBI" id="CHEBI:37565"/>
    </ligand>
</feature>
<feature type="binding site" evidence="1">
    <location>
        <position position="456"/>
    </location>
    <ligand>
        <name>(6S)-5-formyl-5,6,7,8-tetrahydrofolate</name>
        <dbReference type="ChEBI" id="CHEBI:57457"/>
    </ligand>
</feature>
<sequence>MNVPRETIAAIATAQGRGGVGIIRVSGPLAGKAAEAIIGRTLKPRFAHYGPFVDGTGQVLDEGIALYFPGPNSFTGEDVLELQGHGGPIVLDMLLQRCLQLGSRLARPGEFSERAFLNDKLDLAQAEAIADLIEASSAQAARNALRSLQGAFSRRVDNLTEKLISLRIYVEAAIDFPEEEIDFLADGHVLNMLDDVRAELSTVLREAGQGALLRDGMTVVIAGRPNAGKSSLLNALAGREAAIVTEIAGTTRDVLREHIHIDGMPLHVVDTAGLRDTQDQVEMIGVQRALKAIGEADRILLVVDATAPEAADPFALWPEFLEQRPDPSKVTLIRNKADLSGDPINLQTSVDGHVTISLSARSGGEGLELLREHLKACMGYEQTSESSFSARRRHLEALRHASDSLEHGRAQLTLAGAGELLAEDLRQAQQALGEITGAFSSDDLLGRIFSSFCIGK</sequence>
<name>MNME_PSEU2</name>